<name>SECB_BORPD</name>
<evidence type="ECO:0000255" key="1">
    <source>
        <dbReference type="HAMAP-Rule" id="MF_00821"/>
    </source>
</evidence>
<evidence type="ECO:0000256" key="2">
    <source>
        <dbReference type="SAM" id="MobiDB-lite"/>
    </source>
</evidence>
<reference key="1">
    <citation type="journal article" date="2008" name="BMC Genomics">
        <title>The missing link: Bordetella petrii is endowed with both the metabolic versatility of environmental bacteria and virulence traits of pathogenic Bordetellae.</title>
        <authorList>
            <person name="Gross R."/>
            <person name="Guzman C.A."/>
            <person name="Sebaihia M."/>
            <person name="Martin dos Santos V.A.P."/>
            <person name="Pieper D.H."/>
            <person name="Koebnik R."/>
            <person name="Lechner M."/>
            <person name="Bartels D."/>
            <person name="Buhrmester J."/>
            <person name="Choudhuri J.V."/>
            <person name="Ebensen T."/>
            <person name="Gaigalat L."/>
            <person name="Herrmann S."/>
            <person name="Khachane A.N."/>
            <person name="Larisch C."/>
            <person name="Link S."/>
            <person name="Linke B."/>
            <person name="Meyer F."/>
            <person name="Mormann S."/>
            <person name="Nakunst D."/>
            <person name="Rueckert C."/>
            <person name="Schneiker-Bekel S."/>
            <person name="Schulze K."/>
            <person name="Voerholter F.-J."/>
            <person name="Yevsa T."/>
            <person name="Engle J.T."/>
            <person name="Goldman W.E."/>
            <person name="Puehler A."/>
            <person name="Goebel U.B."/>
            <person name="Goesmann A."/>
            <person name="Bloecker H."/>
            <person name="Kaiser O."/>
            <person name="Martinez-Arias R."/>
        </authorList>
    </citation>
    <scope>NUCLEOTIDE SEQUENCE [LARGE SCALE GENOMIC DNA]</scope>
    <source>
        <strain>ATCC BAA-461 / DSM 12804 / CCUG 43448</strain>
    </source>
</reference>
<organism>
    <name type="scientific">Bordetella petrii (strain ATCC BAA-461 / DSM 12804 / CCUG 43448)</name>
    <dbReference type="NCBI Taxonomy" id="340100"/>
    <lineage>
        <taxon>Bacteria</taxon>
        <taxon>Pseudomonadati</taxon>
        <taxon>Pseudomonadota</taxon>
        <taxon>Betaproteobacteria</taxon>
        <taxon>Burkholderiales</taxon>
        <taxon>Alcaligenaceae</taxon>
        <taxon>Bordetella</taxon>
    </lineage>
</organism>
<protein>
    <recommendedName>
        <fullName evidence="1">Protein-export protein SecB</fullName>
    </recommendedName>
</protein>
<proteinExistence type="inferred from homology"/>
<comment type="function">
    <text evidence="1">One of the proteins required for the normal export of preproteins out of the cell cytoplasm. It is a molecular chaperone that binds to a subset of precursor proteins, maintaining them in a translocation-competent state. It also specifically binds to its receptor SecA.</text>
</comment>
<comment type="subunit">
    <text evidence="1">Homotetramer, a dimer of dimers. One homotetramer interacts with 1 SecA dimer.</text>
</comment>
<comment type="subcellular location">
    <subcellularLocation>
        <location evidence="1">Cytoplasm</location>
    </subcellularLocation>
</comment>
<comment type="similarity">
    <text evidence="1">Belongs to the SecB family.</text>
</comment>
<dbReference type="EMBL" id="AM902716">
    <property type="protein sequence ID" value="CAP45049.1"/>
    <property type="molecule type" value="Genomic_DNA"/>
</dbReference>
<dbReference type="SMR" id="A9IFJ5"/>
<dbReference type="STRING" id="94624.Bpet4697"/>
<dbReference type="KEGG" id="bpt:Bpet4697"/>
<dbReference type="eggNOG" id="COG1952">
    <property type="taxonomic scope" value="Bacteria"/>
</dbReference>
<dbReference type="Proteomes" id="UP000001225">
    <property type="component" value="Chromosome"/>
</dbReference>
<dbReference type="GO" id="GO:0005737">
    <property type="term" value="C:cytoplasm"/>
    <property type="evidence" value="ECO:0007669"/>
    <property type="project" value="UniProtKB-SubCell"/>
</dbReference>
<dbReference type="GO" id="GO:0051082">
    <property type="term" value="F:unfolded protein binding"/>
    <property type="evidence" value="ECO:0007669"/>
    <property type="project" value="InterPro"/>
</dbReference>
<dbReference type="GO" id="GO:0006457">
    <property type="term" value="P:protein folding"/>
    <property type="evidence" value="ECO:0007669"/>
    <property type="project" value="UniProtKB-UniRule"/>
</dbReference>
<dbReference type="GO" id="GO:0051262">
    <property type="term" value="P:protein tetramerization"/>
    <property type="evidence" value="ECO:0007669"/>
    <property type="project" value="InterPro"/>
</dbReference>
<dbReference type="GO" id="GO:0015031">
    <property type="term" value="P:protein transport"/>
    <property type="evidence" value="ECO:0007669"/>
    <property type="project" value="UniProtKB-UniRule"/>
</dbReference>
<dbReference type="Gene3D" id="3.10.420.10">
    <property type="entry name" value="SecB-like"/>
    <property type="match status" value="1"/>
</dbReference>
<dbReference type="HAMAP" id="MF_00821">
    <property type="entry name" value="SecB"/>
    <property type="match status" value="1"/>
</dbReference>
<dbReference type="InterPro" id="IPR003708">
    <property type="entry name" value="SecB"/>
</dbReference>
<dbReference type="InterPro" id="IPR035958">
    <property type="entry name" value="SecB-like_sf"/>
</dbReference>
<dbReference type="NCBIfam" id="NF004394">
    <property type="entry name" value="PRK05751.1-5"/>
    <property type="match status" value="1"/>
</dbReference>
<dbReference type="NCBIfam" id="TIGR00809">
    <property type="entry name" value="secB"/>
    <property type="match status" value="1"/>
</dbReference>
<dbReference type="PANTHER" id="PTHR36918">
    <property type="match status" value="1"/>
</dbReference>
<dbReference type="PANTHER" id="PTHR36918:SF1">
    <property type="entry name" value="PROTEIN-EXPORT PROTEIN SECB"/>
    <property type="match status" value="1"/>
</dbReference>
<dbReference type="Pfam" id="PF02556">
    <property type="entry name" value="SecB"/>
    <property type="match status" value="1"/>
</dbReference>
<dbReference type="PRINTS" id="PR01594">
    <property type="entry name" value="SECBCHAPRONE"/>
</dbReference>
<dbReference type="SUPFAM" id="SSF54611">
    <property type="entry name" value="SecB-like"/>
    <property type="match status" value="1"/>
</dbReference>
<keyword id="KW-0143">Chaperone</keyword>
<keyword id="KW-0963">Cytoplasm</keyword>
<keyword id="KW-0653">Protein transport</keyword>
<keyword id="KW-0811">Translocation</keyword>
<keyword id="KW-0813">Transport</keyword>
<gene>
    <name evidence="1" type="primary">secB</name>
    <name type="ordered locus">Bpet4697</name>
</gene>
<accession>A9IFJ5</accession>
<sequence length="175" mass="19055">MAEQDQNTQQAGGDAPSFNLQRVYLKDLSLEMPNAPHVFLEQEQPQVEVSINVGGQRLAETVFESTVTATVTTRINDKVLYLVEGTQAGIFELANIPAEQMDALLGIVCPTMLYPYLRANVADAITRTSLPALHLAEVNFQALYEQRLAELAQQQGGNNNGSDSGIILPPGTTRQ</sequence>
<feature type="chain" id="PRO_1000134363" description="Protein-export protein SecB">
    <location>
        <begin position="1"/>
        <end position="175"/>
    </location>
</feature>
<feature type="region of interest" description="Disordered" evidence="2">
    <location>
        <begin position="154"/>
        <end position="175"/>
    </location>
</feature>